<organism>
    <name type="scientific">Oryza sativa subsp. japonica</name>
    <name type="common">Rice</name>
    <dbReference type="NCBI Taxonomy" id="39947"/>
    <lineage>
        <taxon>Eukaryota</taxon>
        <taxon>Viridiplantae</taxon>
        <taxon>Streptophyta</taxon>
        <taxon>Embryophyta</taxon>
        <taxon>Tracheophyta</taxon>
        <taxon>Spermatophyta</taxon>
        <taxon>Magnoliopsida</taxon>
        <taxon>Liliopsida</taxon>
        <taxon>Poales</taxon>
        <taxon>Poaceae</taxon>
        <taxon>BOP clade</taxon>
        <taxon>Oryzoideae</taxon>
        <taxon>Oryzeae</taxon>
        <taxon>Oryzinae</taxon>
        <taxon>Oryza</taxon>
        <taxon>Oryza sativa</taxon>
    </lineage>
</organism>
<comment type="function">
    <text evidence="1">Probable serine-threonine kinase that may regulate brassinosteroid signaling.</text>
</comment>
<comment type="catalytic activity">
    <reaction evidence="5">
        <text>L-seryl-[protein] + ATP = O-phospho-L-seryl-[protein] + ADP + H(+)</text>
        <dbReference type="Rhea" id="RHEA:17989"/>
        <dbReference type="Rhea" id="RHEA-COMP:9863"/>
        <dbReference type="Rhea" id="RHEA-COMP:11604"/>
        <dbReference type="ChEBI" id="CHEBI:15378"/>
        <dbReference type="ChEBI" id="CHEBI:29999"/>
        <dbReference type="ChEBI" id="CHEBI:30616"/>
        <dbReference type="ChEBI" id="CHEBI:83421"/>
        <dbReference type="ChEBI" id="CHEBI:456216"/>
        <dbReference type="EC" id="2.7.11.1"/>
    </reaction>
</comment>
<comment type="catalytic activity">
    <reaction evidence="5">
        <text>L-threonyl-[protein] + ATP = O-phospho-L-threonyl-[protein] + ADP + H(+)</text>
        <dbReference type="Rhea" id="RHEA:46608"/>
        <dbReference type="Rhea" id="RHEA-COMP:11060"/>
        <dbReference type="Rhea" id="RHEA-COMP:11605"/>
        <dbReference type="ChEBI" id="CHEBI:15378"/>
        <dbReference type="ChEBI" id="CHEBI:30013"/>
        <dbReference type="ChEBI" id="CHEBI:30616"/>
        <dbReference type="ChEBI" id="CHEBI:61977"/>
        <dbReference type="ChEBI" id="CHEBI:456216"/>
        <dbReference type="EC" id="2.7.11.1"/>
    </reaction>
</comment>
<comment type="subunit">
    <text evidence="3">Interacts with LIC.</text>
</comment>
<comment type="similarity">
    <text evidence="5">Belongs to the protein kinase superfamily. CMGC Ser/Thr protein kinase family. GSK-3 subfamily.</text>
</comment>
<dbReference type="EC" id="2.7.11.1" evidence="5"/>
<dbReference type="EMBL" id="Y13437">
    <property type="protein sequence ID" value="CAA73848.1"/>
    <property type="molecule type" value="mRNA"/>
</dbReference>
<dbReference type="EMBL" id="AP004731">
    <property type="protein sequence ID" value="BAD54124.1"/>
    <property type="molecule type" value="Genomic_DNA"/>
</dbReference>
<dbReference type="EMBL" id="AP008212">
    <property type="protein sequence ID" value="BAF19738.1"/>
    <property type="molecule type" value="Genomic_DNA"/>
</dbReference>
<dbReference type="EMBL" id="AP014962">
    <property type="protein sequence ID" value="BAS98159.1"/>
    <property type="molecule type" value="Genomic_DNA"/>
</dbReference>
<dbReference type="EMBL" id="CM000143">
    <property type="protein sequence ID" value="EAZ37291.1"/>
    <property type="molecule type" value="Genomic_DNA"/>
</dbReference>
<dbReference type="EMBL" id="AK100950">
    <property type="protein sequence ID" value="BAG94846.1"/>
    <property type="molecule type" value="mRNA"/>
</dbReference>
<dbReference type="PIR" id="T03777">
    <property type="entry name" value="T03777"/>
</dbReference>
<dbReference type="RefSeq" id="NP_001389787.1">
    <property type="nucleotide sequence ID" value="NM_001402858.1"/>
</dbReference>
<dbReference type="RefSeq" id="XP_015644139.1">
    <property type="nucleotide sequence ID" value="XM_015788653.1"/>
</dbReference>
<dbReference type="SMR" id="Q5Z7J0"/>
<dbReference type="FunCoup" id="Q5Z7J0">
    <property type="interactions" value="1747"/>
</dbReference>
<dbReference type="STRING" id="39947.Q5Z7J0"/>
<dbReference type="iPTMnet" id="Q5Z7J0"/>
<dbReference type="PaxDb" id="39947-Q5Z7J0"/>
<dbReference type="EnsemblPlants" id="Os06t0547900-01">
    <property type="protein sequence ID" value="Os06t0547900-01"/>
    <property type="gene ID" value="Os06g0547900"/>
</dbReference>
<dbReference type="EnsemblPlants" id="Os06t0547900-02">
    <property type="protein sequence ID" value="Os06t0547900-02"/>
    <property type="gene ID" value="Os06g0547900"/>
</dbReference>
<dbReference type="GeneID" id="4341251"/>
<dbReference type="Gramene" id="Os06t0547900-01">
    <property type="protein sequence ID" value="Os06t0547900-01"/>
    <property type="gene ID" value="Os06g0547900"/>
</dbReference>
<dbReference type="Gramene" id="Os06t0547900-02">
    <property type="protein sequence ID" value="Os06t0547900-02"/>
    <property type="gene ID" value="Os06g0547900"/>
</dbReference>
<dbReference type="KEGG" id="dosa:Os06g0547900"/>
<dbReference type="eggNOG" id="KOG0658">
    <property type="taxonomic scope" value="Eukaryota"/>
</dbReference>
<dbReference type="HOGENOM" id="CLU_000288_181_20_1"/>
<dbReference type="InParanoid" id="Q5Z7J0"/>
<dbReference type="OMA" id="NAPGVCH"/>
<dbReference type="OrthoDB" id="272141at2759"/>
<dbReference type="Proteomes" id="UP000000763">
    <property type="component" value="Chromosome 6"/>
</dbReference>
<dbReference type="Proteomes" id="UP000007752">
    <property type="component" value="Chromosome 6"/>
</dbReference>
<dbReference type="Proteomes" id="UP000059680">
    <property type="component" value="Chromosome 6"/>
</dbReference>
<dbReference type="GO" id="GO:0005737">
    <property type="term" value="C:cytoplasm"/>
    <property type="evidence" value="ECO:0000318"/>
    <property type="project" value="GO_Central"/>
</dbReference>
<dbReference type="GO" id="GO:0005634">
    <property type="term" value="C:nucleus"/>
    <property type="evidence" value="ECO:0000318"/>
    <property type="project" value="GO_Central"/>
</dbReference>
<dbReference type="GO" id="GO:0005524">
    <property type="term" value="F:ATP binding"/>
    <property type="evidence" value="ECO:0007669"/>
    <property type="project" value="UniProtKB-KW"/>
</dbReference>
<dbReference type="GO" id="GO:0106310">
    <property type="term" value="F:protein serine kinase activity"/>
    <property type="evidence" value="ECO:0007669"/>
    <property type="project" value="RHEA"/>
</dbReference>
<dbReference type="GO" id="GO:0004674">
    <property type="term" value="F:protein serine/threonine kinase activity"/>
    <property type="evidence" value="ECO:0000318"/>
    <property type="project" value="GO_Central"/>
</dbReference>
<dbReference type="GO" id="GO:0009742">
    <property type="term" value="P:brassinosteroid mediated signaling pathway"/>
    <property type="evidence" value="ECO:0000318"/>
    <property type="project" value="GO_Central"/>
</dbReference>
<dbReference type="GO" id="GO:0030154">
    <property type="term" value="P:cell differentiation"/>
    <property type="evidence" value="ECO:0000318"/>
    <property type="project" value="GO_Central"/>
</dbReference>
<dbReference type="CDD" id="cd14137">
    <property type="entry name" value="STKc_GSK3"/>
    <property type="match status" value="1"/>
</dbReference>
<dbReference type="FunFam" id="3.30.200.20:FF:000009">
    <property type="entry name" value="Glycogen synthase kinase-3 beta"/>
    <property type="match status" value="1"/>
</dbReference>
<dbReference type="FunFam" id="1.10.510.10:FF:000082">
    <property type="entry name" value="Shaggy-related protein kinase kappa"/>
    <property type="match status" value="1"/>
</dbReference>
<dbReference type="Gene3D" id="3.30.200.20">
    <property type="entry name" value="Phosphorylase Kinase, domain 1"/>
    <property type="match status" value="1"/>
</dbReference>
<dbReference type="Gene3D" id="1.10.510.10">
    <property type="entry name" value="Transferase(Phosphotransferase) domain 1"/>
    <property type="match status" value="1"/>
</dbReference>
<dbReference type="InterPro" id="IPR050591">
    <property type="entry name" value="GSK-3"/>
</dbReference>
<dbReference type="InterPro" id="IPR011009">
    <property type="entry name" value="Kinase-like_dom_sf"/>
</dbReference>
<dbReference type="InterPro" id="IPR000719">
    <property type="entry name" value="Prot_kinase_dom"/>
</dbReference>
<dbReference type="InterPro" id="IPR017441">
    <property type="entry name" value="Protein_kinase_ATP_BS"/>
</dbReference>
<dbReference type="InterPro" id="IPR008271">
    <property type="entry name" value="Ser/Thr_kinase_AS"/>
</dbReference>
<dbReference type="InterPro" id="IPR039192">
    <property type="entry name" value="STKc_GSK3"/>
</dbReference>
<dbReference type="PANTHER" id="PTHR24057">
    <property type="entry name" value="GLYCOGEN SYNTHASE KINASE-3 ALPHA"/>
    <property type="match status" value="1"/>
</dbReference>
<dbReference type="PANTHER" id="PTHR24057:SF38">
    <property type="entry name" value="SHAGGY-RELATED PROTEIN KINASE GSK4"/>
    <property type="match status" value="1"/>
</dbReference>
<dbReference type="Pfam" id="PF00069">
    <property type="entry name" value="Pkinase"/>
    <property type="match status" value="1"/>
</dbReference>
<dbReference type="SMART" id="SM00220">
    <property type="entry name" value="S_TKc"/>
    <property type="match status" value="1"/>
</dbReference>
<dbReference type="SUPFAM" id="SSF56112">
    <property type="entry name" value="Protein kinase-like (PK-like)"/>
    <property type="match status" value="1"/>
</dbReference>
<dbReference type="PROSITE" id="PS00107">
    <property type="entry name" value="PROTEIN_KINASE_ATP"/>
    <property type="match status" value="1"/>
</dbReference>
<dbReference type="PROSITE" id="PS50011">
    <property type="entry name" value="PROTEIN_KINASE_DOM"/>
    <property type="match status" value="1"/>
</dbReference>
<dbReference type="PROSITE" id="PS00108">
    <property type="entry name" value="PROTEIN_KINASE_ST"/>
    <property type="match status" value="1"/>
</dbReference>
<sequence length="403" mass="45307">MAAMPGGPDLAGAGGAVAVAVDAMQVDDPPRASAEEKHGPTIMGGNDPVTGHIISTTIGGKNDEPKRTISYMAERVVGTGSFGVVFQAKCLETGETVAIKKVLQDKRYKNRELQIMRSMDHCNVISLKHCFFSTTSRDELFLNLVMEFVPESLYRVLKHYKDMKQRMPLIYVKLYMYQIFRGLAYIHTVPGVCHRDIKPQNILVDPLTHQVKVCDFGSAKMLIKGEANISYICSRYYRAPELIFGATEYTTSIDIWSAGCVLAELLLGQPLFPGESAVDQLVEIIKVLGTPTREEIRCMNPNYTEFKFPQIKACPWHKIFHKRMPPEAIDLVSRLLQYSPNLRCTALEACAHSFFDELREPHAKLPNGRPFPPLFNFKQELANTHPELVSRLLPEHAQRHSGF</sequence>
<reference key="1">
    <citation type="submission" date="1997-05" db="EMBL/GenBank/DDBJ databases">
        <title>Oryza sativa mRNA for shaggy-like kinase etha.</title>
        <authorList>
            <person name="Dornelas M.C."/>
            <person name="Kreis M."/>
        </authorList>
    </citation>
    <scope>NUCLEOTIDE SEQUENCE [MRNA]</scope>
    <source>
        <strain>cv. Nipponbare</strain>
        <tissue>Root</tissue>
    </source>
</reference>
<reference key="2">
    <citation type="journal article" date="2005" name="Nature">
        <title>The map-based sequence of the rice genome.</title>
        <authorList>
            <consortium name="International rice genome sequencing project (IRGSP)"/>
        </authorList>
    </citation>
    <scope>NUCLEOTIDE SEQUENCE [LARGE SCALE GENOMIC DNA]</scope>
    <source>
        <strain>cv. Nipponbare</strain>
    </source>
</reference>
<reference key="3">
    <citation type="journal article" date="2008" name="Nucleic Acids Res.">
        <title>The rice annotation project database (RAP-DB): 2008 update.</title>
        <authorList>
            <consortium name="The rice annotation project (RAP)"/>
        </authorList>
    </citation>
    <scope>GENOME REANNOTATION</scope>
    <source>
        <strain>cv. Nipponbare</strain>
    </source>
</reference>
<reference key="4">
    <citation type="journal article" date="2013" name="Rice">
        <title>Improvement of the Oryza sativa Nipponbare reference genome using next generation sequence and optical map data.</title>
        <authorList>
            <person name="Kawahara Y."/>
            <person name="de la Bastide M."/>
            <person name="Hamilton J.P."/>
            <person name="Kanamori H."/>
            <person name="McCombie W.R."/>
            <person name="Ouyang S."/>
            <person name="Schwartz D.C."/>
            <person name="Tanaka T."/>
            <person name="Wu J."/>
            <person name="Zhou S."/>
            <person name="Childs K.L."/>
            <person name="Davidson R.M."/>
            <person name="Lin H."/>
            <person name="Quesada-Ocampo L."/>
            <person name="Vaillancourt B."/>
            <person name="Sakai H."/>
            <person name="Lee S.S."/>
            <person name="Kim J."/>
            <person name="Numa H."/>
            <person name="Itoh T."/>
            <person name="Buell C.R."/>
            <person name="Matsumoto T."/>
        </authorList>
    </citation>
    <scope>GENOME REANNOTATION</scope>
    <source>
        <strain>cv. Nipponbare</strain>
    </source>
</reference>
<reference key="5">
    <citation type="journal article" date="2005" name="PLoS Biol.">
        <title>The genomes of Oryza sativa: a history of duplications.</title>
        <authorList>
            <person name="Yu J."/>
            <person name="Wang J."/>
            <person name="Lin W."/>
            <person name="Li S."/>
            <person name="Li H."/>
            <person name="Zhou J."/>
            <person name="Ni P."/>
            <person name="Dong W."/>
            <person name="Hu S."/>
            <person name="Zeng C."/>
            <person name="Zhang J."/>
            <person name="Zhang Y."/>
            <person name="Li R."/>
            <person name="Xu Z."/>
            <person name="Li S."/>
            <person name="Li X."/>
            <person name="Zheng H."/>
            <person name="Cong L."/>
            <person name="Lin L."/>
            <person name="Yin J."/>
            <person name="Geng J."/>
            <person name="Li G."/>
            <person name="Shi J."/>
            <person name="Liu J."/>
            <person name="Lv H."/>
            <person name="Li J."/>
            <person name="Wang J."/>
            <person name="Deng Y."/>
            <person name="Ran L."/>
            <person name="Shi X."/>
            <person name="Wang X."/>
            <person name="Wu Q."/>
            <person name="Li C."/>
            <person name="Ren X."/>
            <person name="Wang J."/>
            <person name="Wang X."/>
            <person name="Li D."/>
            <person name="Liu D."/>
            <person name="Zhang X."/>
            <person name="Ji Z."/>
            <person name="Zhao W."/>
            <person name="Sun Y."/>
            <person name="Zhang Z."/>
            <person name="Bao J."/>
            <person name="Han Y."/>
            <person name="Dong L."/>
            <person name="Ji J."/>
            <person name="Chen P."/>
            <person name="Wu S."/>
            <person name="Liu J."/>
            <person name="Xiao Y."/>
            <person name="Bu D."/>
            <person name="Tan J."/>
            <person name="Yang L."/>
            <person name="Ye C."/>
            <person name="Zhang J."/>
            <person name="Xu J."/>
            <person name="Zhou Y."/>
            <person name="Yu Y."/>
            <person name="Zhang B."/>
            <person name="Zhuang S."/>
            <person name="Wei H."/>
            <person name="Liu B."/>
            <person name="Lei M."/>
            <person name="Yu H."/>
            <person name="Li Y."/>
            <person name="Xu H."/>
            <person name="Wei S."/>
            <person name="He X."/>
            <person name="Fang L."/>
            <person name="Zhang Z."/>
            <person name="Zhang Y."/>
            <person name="Huang X."/>
            <person name="Su Z."/>
            <person name="Tong W."/>
            <person name="Li J."/>
            <person name="Tong Z."/>
            <person name="Li S."/>
            <person name="Ye J."/>
            <person name="Wang L."/>
            <person name="Fang L."/>
            <person name="Lei T."/>
            <person name="Chen C.-S."/>
            <person name="Chen H.-C."/>
            <person name="Xu Z."/>
            <person name="Li H."/>
            <person name="Huang H."/>
            <person name="Zhang F."/>
            <person name="Xu H."/>
            <person name="Li N."/>
            <person name="Zhao C."/>
            <person name="Li S."/>
            <person name="Dong L."/>
            <person name="Huang Y."/>
            <person name="Li L."/>
            <person name="Xi Y."/>
            <person name="Qi Q."/>
            <person name="Li W."/>
            <person name="Zhang B."/>
            <person name="Hu W."/>
            <person name="Zhang Y."/>
            <person name="Tian X."/>
            <person name="Jiao Y."/>
            <person name="Liang X."/>
            <person name="Jin J."/>
            <person name="Gao L."/>
            <person name="Zheng W."/>
            <person name="Hao B."/>
            <person name="Liu S.-M."/>
            <person name="Wang W."/>
            <person name="Yuan L."/>
            <person name="Cao M."/>
            <person name="McDermott J."/>
            <person name="Samudrala R."/>
            <person name="Wang J."/>
            <person name="Wong G.K.-S."/>
            <person name="Yang H."/>
        </authorList>
    </citation>
    <scope>NUCLEOTIDE SEQUENCE [LARGE SCALE GENOMIC DNA]</scope>
    <source>
        <strain>cv. Nipponbare</strain>
    </source>
</reference>
<reference key="6">
    <citation type="journal article" date="2003" name="Science">
        <title>Collection, mapping, and annotation of over 28,000 cDNA clones from japonica rice.</title>
        <authorList>
            <consortium name="The rice full-length cDNA consortium"/>
        </authorList>
    </citation>
    <scope>NUCLEOTIDE SEQUENCE [LARGE SCALE MRNA]</scope>
    <source>
        <strain>cv. Nipponbare</strain>
    </source>
</reference>
<reference key="7">
    <citation type="journal article" date="2012" name="PLoS Genet.">
        <title>Dynamics of brassinosteroid response modulated by negative regulator LIC in rice.</title>
        <authorList>
            <person name="Zhang C."/>
            <person name="Xu Y."/>
            <person name="Guo S."/>
            <person name="Zhu J."/>
            <person name="Huan Q."/>
            <person name="Liu H."/>
            <person name="Wang L."/>
            <person name="Luo G."/>
            <person name="Wang X."/>
            <person name="Chong K."/>
        </authorList>
    </citation>
    <scope>INTERACTION WITH LIC</scope>
</reference>
<gene>
    <name evidence="5" type="primary">GSK4</name>
    <name evidence="7" type="ordered locus">Os06g0547900</name>
    <name evidence="5" type="ordered locus">LOC_Os06g35530</name>
    <name evidence="8" type="ORF">OsJ_21630</name>
    <name evidence="6" type="ORF">OSJNBa0016D02.31</name>
</gene>
<evidence type="ECO:0000250" key="1">
    <source>
        <dbReference type="UniProtKB" id="Q60EZ2"/>
    </source>
</evidence>
<evidence type="ECO:0000255" key="2">
    <source>
        <dbReference type="PROSITE-ProRule" id="PRU00159"/>
    </source>
</evidence>
<evidence type="ECO:0000269" key="3">
    <source>
    </source>
</evidence>
<evidence type="ECO:0000303" key="4">
    <source>
    </source>
</evidence>
<evidence type="ECO:0000305" key="5"/>
<evidence type="ECO:0000312" key="6">
    <source>
        <dbReference type="EMBL" id="BAD54124.1"/>
    </source>
</evidence>
<evidence type="ECO:0000312" key="7">
    <source>
        <dbReference type="EMBL" id="BAF19738.1"/>
    </source>
</evidence>
<evidence type="ECO:0000312" key="8">
    <source>
        <dbReference type="EMBL" id="EAZ37291.1"/>
    </source>
</evidence>
<name>GSK4_ORYSJ</name>
<keyword id="KW-0067">ATP-binding</keyword>
<keyword id="KW-1070">Brassinosteroid signaling pathway</keyword>
<keyword id="KW-0418">Kinase</keyword>
<keyword id="KW-0547">Nucleotide-binding</keyword>
<keyword id="KW-1185">Reference proteome</keyword>
<keyword id="KW-0723">Serine/threonine-protein kinase</keyword>
<keyword id="KW-0808">Transferase</keyword>
<proteinExistence type="evidence at protein level"/>
<protein>
    <recommendedName>
        <fullName evidence="5">Shaggy-related protein kinase GSK4</fullName>
        <ecNumber evidence="5">2.7.11.1</ecNumber>
    </recommendedName>
    <alternativeName>
        <fullName evidence="5">Glycogen synthase kinase3-like protein 4</fullName>
        <shortName evidence="5">OsGSK4</shortName>
    </alternativeName>
    <alternativeName>
        <fullName evidence="5">Shaggy-related protein kinase etha homolog</fullName>
        <shortName evidence="4">OsKETHA</shortName>
        <shortName evidence="4">SKETHA</shortName>
    </alternativeName>
</protein>
<accession>Q5Z7J0</accession>
<accession>O04401</accession>
<feature type="chain" id="PRO_0000439009" description="Shaggy-related protein kinase GSK4">
    <location>
        <begin position="1"/>
        <end position="403"/>
    </location>
</feature>
<feature type="domain" description="Protein kinase" evidence="2">
    <location>
        <begin position="71"/>
        <end position="355"/>
    </location>
</feature>
<feature type="active site" description="Proton acceptor" evidence="2">
    <location>
        <position position="196"/>
    </location>
</feature>
<feature type="binding site" evidence="2">
    <location>
        <begin position="77"/>
        <end position="85"/>
    </location>
    <ligand>
        <name>ATP</name>
        <dbReference type="ChEBI" id="CHEBI:30616"/>
    </ligand>
</feature>
<feature type="binding site" evidence="2">
    <location>
        <position position="100"/>
    </location>
    <ligand>
        <name>ATP</name>
        <dbReference type="ChEBI" id="CHEBI:30616"/>
    </ligand>
</feature>
<feature type="sequence conflict" description="In Ref. 1; CAA73848." evidence="5" ref="1">
    <original>V</original>
    <variation>L</variation>
    <location>
        <position position="213"/>
    </location>
</feature>